<keyword id="KW-1015">Disulfide bond</keyword>
<keyword id="KW-0472">Membrane</keyword>
<keyword id="KW-1185">Reference proteome</keyword>
<keyword id="KW-0812">Transmembrane</keyword>
<keyword id="KW-1133">Transmembrane helix</keyword>
<organism>
    <name type="scientific">Caenorhabditis elegans</name>
    <dbReference type="NCBI Taxonomy" id="6239"/>
    <lineage>
        <taxon>Eukaryota</taxon>
        <taxon>Metazoa</taxon>
        <taxon>Ecdysozoa</taxon>
        <taxon>Nematoda</taxon>
        <taxon>Chromadorea</taxon>
        <taxon>Rhabditida</taxon>
        <taxon>Rhabditina</taxon>
        <taxon>Rhabditomorpha</taxon>
        <taxon>Rhabditoidea</taxon>
        <taxon>Rhabditidae</taxon>
        <taxon>Peloderinae</taxon>
        <taxon>Caenorhabditis</taxon>
    </lineage>
</organism>
<sequence>MVVEQIEVIEHRIIEEGRRPSGGPLLGNTVPFSTIRESRESYEQRADGTIHDRRYEVTGERDVSREPSFLHTSANYGQHIETSPPPVQRYNVSGATNSSFLNTSGDSRVSYPGADRSNDTTVINNYGYDIHEVRTDDGGARIIETHGSGPLRETSRIEHVEETITRPSAMRSSSAAAQRSSSNIFTVPAPAAHVSYRQEFASDNESLARKDSYRAMQSSWDGDEKKMTSTLNSRRFPPQSQTSLVSRETDQHSGKKIGCLKKIRTFYQGVRYAFENSEYTPELLRSLCCILLLLLLLLFLMFIIFNAIFNRYAVSEFLLYPPVCEECRRKNPALVSAALPSSVFVHFFSKHQAHFELRGNQPFKSNSFTAVDFNTGYVAYADHSLTDANGKHFTCFLMPLDRSAIDSIDQLSEAVSESSYEIQSTFGWQEFYQFDPEKIEPMTAKQKFTEEIDDCEGAQWYLLRQTVHARDASCSECYDFCLPDWAVVRKEKYEDESTLGVRRLNCFRLYVPQWSNFRVETDIGGGHWKYPLSSESTKRDKNGEWVHWIPTTNAQGFSRSRKSINNATLV</sequence>
<reference key="1">
    <citation type="journal article" date="1998" name="Science">
        <title>Genome sequence of the nematode C. elegans: a platform for investigating biology.</title>
        <authorList>
            <consortium name="The C. elegans sequencing consortium"/>
        </authorList>
    </citation>
    <scope>NUCLEOTIDE SEQUENCE [LARGE SCALE GENOMIC DNA]</scope>
    <source>
        <strain>Bristol N2</strain>
    </source>
</reference>
<protein>
    <recommendedName>
        <fullName>BRICHOS domain-containing protein C09F5.1</fullName>
    </recommendedName>
</protein>
<comment type="subcellular location">
    <subcellularLocation>
        <location evidence="4">Membrane</location>
        <topology evidence="4">Single-pass membrane protein</topology>
    </subcellularLocation>
</comment>
<dbReference type="EMBL" id="FO080475">
    <property type="protein sequence ID" value="CCD63978.1"/>
    <property type="molecule type" value="Genomic_DNA"/>
</dbReference>
<dbReference type="PIR" id="T15477">
    <property type="entry name" value="T15477"/>
</dbReference>
<dbReference type="RefSeq" id="NP_497232.2">
    <property type="nucleotide sequence ID" value="NM_064831.8"/>
</dbReference>
<dbReference type="SMR" id="Q09231"/>
<dbReference type="FunCoup" id="Q09231">
    <property type="interactions" value="197"/>
</dbReference>
<dbReference type="STRING" id="6239.C09F5.1a.1"/>
<dbReference type="iPTMnet" id="Q09231"/>
<dbReference type="PaxDb" id="6239-C09F5.1"/>
<dbReference type="PeptideAtlas" id="Q09231"/>
<dbReference type="EnsemblMetazoa" id="C09F5.1a.1">
    <property type="protein sequence ID" value="C09F5.1a.1"/>
    <property type="gene ID" value="WBGene00015647"/>
</dbReference>
<dbReference type="GeneID" id="175222"/>
<dbReference type="KEGG" id="cel:CELE_C09F5.1"/>
<dbReference type="UCSC" id="C09F5.1">
    <property type="organism name" value="c. elegans"/>
</dbReference>
<dbReference type="AGR" id="WB:WBGene00015647"/>
<dbReference type="CTD" id="175222"/>
<dbReference type="WormBase" id="C09F5.1a">
    <property type="protein sequence ID" value="CE44860"/>
    <property type="gene ID" value="WBGene00015647"/>
</dbReference>
<dbReference type="eggNOG" id="ENOG502QWHC">
    <property type="taxonomic scope" value="Eukaryota"/>
</dbReference>
<dbReference type="GeneTree" id="ENSGT00970000196277"/>
<dbReference type="HOGENOM" id="CLU_460215_0_0_1"/>
<dbReference type="InParanoid" id="Q09231"/>
<dbReference type="OMA" id="WQEYWQY"/>
<dbReference type="OrthoDB" id="5838366at2759"/>
<dbReference type="PRO" id="PR:Q09231"/>
<dbReference type="Proteomes" id="UP000001940">
    <property type="component" value="Chromosome III"/>
</dbReference>
<dbReference type="Bgee" id="WBGene00015647">
    <property type="expression patterns" value="Expressed in pharyngeal muscle cell (C elegans) and 3 other cell types or tissues"/>
</dbReference>
<dbReference type="ExpressionAtlas" id="Q09231">
    <property type="expression patterns" value="baseline and differential"/>
</dbReference>
<dbReference type="GO" id="GO:0016020">
    <property type="term" value="C:membrane"/>
    <property type="evidence" value="ECO:0007669"/>
    <property type="project" value="UniProtKB-SubCell"/>
</dbReference>
<name>YQ21_CAEEL</name>
<evidence type="ECO:0000250" key="1"/>
<evidence type="ECO:0000255" key="2"/>
<evidence type="ECO:0000256" key="3">
    <source>
        <dbReference type="SAM" id="MobiDB-lite"/>
    </source>
</evidence>
<evidence type="ECO:0000305" key="4"/>
<feature type="chain" id="PRO_0000065169" description="BRICHOS domain-containing protein C09F5.1">
    <location>
        <begin position="1"/>
        <end position="570"/>
    </location>
</feature>
<feature type="topological domain" description="Cytoplasmic" evidence="2">
    <location>
        <begin position="1"/>
        <end position="288"/>
    </location>
</feature>
<feature type="transmembrane region" description="Helical" evidence="2">
    <location>
        <begin position="289"/>
        <end position="309"/>
    </location>
</feature>
<feature type="topological domain" description="Extracellular" evidence="2">
    <location>
        <begin position="310"/>
        <end position="570"/>
    </location>
</feature>
<feature type="domain" description="BRICHOS">
    <location>
        <begin position="369"/>
        <end position="461"/>
    </location>
</feature>
<feature type="region of interest" description="Disordered" evidence="3">
    <location>
        <begin position="93"/>
        <end position="116"/>
    </location>
</feature>
<feature type="region of interest" description="Disordered" evidence="3">
    <location>
        <begin position="218"/>
        <end position="248"/>
    </location>
</feature>
<feature type="compositionally biased region" description="Polar residues" evidence="3">
    <location>
        <begin position="93"/>
        <end position="107"/>
    </location>
</feature>
<feature type="compositionally biased region" description="Polar residues" evidence="3">
    <location>
        <begin position="228"/>
        <end position="246"/>
    </location>
</feature>
<feature type="disulfide bond" evidence="1">
    <location>
        <begin position="395"/>
        <end position="455"/>
    </location>
</feature>
<proteinExistence type="predicted"/>
<accession>Q09231</accession>
<gene>
    <name type="ORF">C09F5.1</name>
</gene>